<name>GUAA_STRPG</name>
<keyword id="KW-0067">ATP-binding</keyword>
<keyword id="KW-0315">Glutamine amidotransferase</keyword>
<keyword id="KW-0332">GMP biosynthesis</keyword>
<keyword id="KW-0436">Ligase</keyword>
<keyword id="KW-0547">Nucleotide-binding</keyword>
<keyword id="KW-0658">Purine biosynthesis</keyword>
<dbReference type="EC" id="6.3.5.2" evidence="1"/>
<dbReference type="EMBL" id="AM295007">
    <property type="protein sequence ID" value="CAM30207.1"/>
    <property type="molecule type" value="Genomic_DNA"/>
</dbReference>
<dbReference type="RefSeq" id="WP_011888855.1">
    <property type="nucleotide sequence ID" value="NC_009332.1"/>
</dbReference>
<dbReference type="SMR" id="A2RED2"/>
<dbReference type="MEROPS" id="C26.957"/>
<dbReference type="KEGG" id="spf:SpyM50879"/>
<dbReference type="HOGENOM" id="CLU_014340_0_5_9"/>
<dbReference type="UniPathway" id="UPA00189">
    <property type="reaction ID" value="UER00296"/>
</dbReference>
<dbReference type="GO" id="GO:0005829">
    <property type="term" value="C:cytosol"/>
    <property type="evidence" value="ECO:0007669"/>
    <property type="project" value="TreeGrafter"/>
</dbReference>
<dbReference type="GO" id="GO:0005524">
    <property type="term" value="F:ATP binding"/>
    <property type="evidence" value="ECO:0007669"/>
    <property type="project" value="UniProtKB-UniRule"/>
</dbReference>
<dbReference type="GO" id="GO:0003921">
    <property type="term" value="F:GMP synthase activity"/>
    <property type="evidence" value="ECO:0007669"/>
    <property type="project" value="InterPro"/>
</dbReference>
<dbReference type="CDD" id="cd01742">
    <property type="entry name" value="GATase1_GMP_Synthase"/>
    <property type="match status" value="1"/>
</dbReference>
<dbReference type="CDD" id="cd01997">
    <property type="entry name" value="GMP_synthase_C"/>
    <property type="match status" value="1"/>
</dbReference>
<dbReference type="FunFam" id="3.30.300.10:FF:000002">
    <property type="entry name" value="GMP synthase [glutamine-hydrolyzing]"/>
    <property type="match status" value="1"/>
</dbReference>
<dbReference type="FunFam" id="3.40.50.620:FF:000001">
    <property type="entry name" value="GMP synthase [glutamine-hydrolyzing]"/>
    <property type="match status" value="1"/>
</dbReference>
<dbReference type="FunFam" id="3.40.50.880:FF:000001">
    <property type="entry name" value="GMP synthase [glutamine-hydrolyzing]"/>
    <property type="match status" value="1"/>
</dbReference>
<dbReference type="Gene3D" id="3.30.300.10">
    <property type="match status" value="1"/>
</dbReference>
<dbReference type="Gene3D" id="3.40.50.880">
    <property type="match status" value="1"/>
</dbReference>
<dbReference type="Gene3D" id="3.40.50.620">
    <property type="entry name" value="HUPs"/>
    <property type="match status" value="1"/>
</dbReference>
<dbReference type="HAMAP" id="MF_00344">
    <property type="entry name" value="GMP_synthase"/>
    <property type="match status" value="1"/>
</dbReference>
<dbReference type="InterPro" id="IPR029062">
    <property type="entry name" value="Class_I_gatase-like"/>
</dbReference>
<dbReference type="InterPro" id="IPR017926">
    <property type="entry name" value="GATASE"/>
</dbReference>
<dbReference type="InterPro" id="IPR001674">
    <property type="entry name" value="GMP_synth_C"/>
</dbReference>
<dbReference type="InterPro" id="IPR004739">
    <property type="entry name" value="GMP_synth_GATase"/>
</dbReference>
<dbReference type="InterPro" id="IPR022955">
    <property type="entry name" value="GMP_synthase"/>
</dbReference>
<dbReference type="InterPro" id="IPR025777">
    <property type="entry name" value="GMPS_ATP_PPase_dom"/>
</dbReference>
<dbReference type="InterPro" id="IPR022310">
    <property type="entry name" value="NAD/GMP_synthase"/>
</dbReference>
<dbReference type="InterPro" id="IPR014729">
    <property type="entry name" value="Rossmann-like_a/b/a_fold"/>
</dbReference>
<dbReference type="NCBIfam" id="TIGR00884">
    <property type="entry name" value="guaA_Cterm"/>
    <property type="match status" value="1"/>
</dbReference>
<dbReference type="NCBIfam" id="TIGR00888">
    <property type="entry name" value="guaA_Nterm"/>
    <property type="match status" value="1"/>
</dbReference>
<dbReference type="NCBIfam" id="NF000848">
    <property type="entry name" value="PRK00074.1"/>
    <property type="match status" value="1"/>
</dbReference>
<dbReference type="PANTHER" id="PTHR11922:SF2">
    <property type="entry name" value="GMP SYNTHASE [GLUTAMINE-HYDROLYZING]"/>
    <property type="match status" value="1"/>
</dbReference>
<dbReference type="PANTHER" id="PTHR11922">
    <property type="entry name" value="GMP SYNTHASE-RELATED"/>
    <property type="match status" value="1"/>
</dbReference>
<dbReference type="Pfam" id="PF00117">
    <property type="entry name" value="GATase"/>
    <property type="match status" value="1"/>
</dbReference>
<dbReference type="Pfam" id="PF00958">
    <property type="entry name" value="GMP_synt_C"/>
    <property type="match status" value="1"/>
</dbReference>
<dbReference type="Pfam" id="PF02540">
    <property type="entry name" value="NAD_synthase"/>
    <property type="match status" value="1"/>
</dbReference>
<dbReference type="PRINTS" id="PR00097">
    <property type="entry name" value="ANTSNTHASEII"/>
</dbReference>
<dbReference type="PRINTS" id="PR00099">
    <property type="entry name" value="CPSGATASE"/>
</dbReference>
<dbReference type="PRINTS" id="PR00096">
    <property type="entry name" value="GATASE"/>
</dbReference>
<dbReference type="SUPFAM" id="SSF52402">
    <property type="entry name" value="Adenine nucleotide alpha hydrolases-like"/>
    <property type="match status" value="1"/>
</dbReference>
<dbReference type="SUPFAM" id="SSF52317">
    <property type="entry name" value="Class I glutamine amidotransferase-like"/>
    <property type="match status" value="1"/>
</dbReference>
<dbReference type="SUPFAM" id="SSF54810">
    <property type="entry name" value="GMP synthetase C-terminal dimerisation domain"/>
    <property type="match status" value="1"/>
</dbReference>
<dbReference type="PROSITE" id="PS51273">
    <property type="entry name" value="GATASE_TYPE_1"/>
    <property type="match status" value="1"/>
</dbReference>
<dbReference type="PROSITE" id="PS51553">
    <property type="entry name" value="GMPS_ATP_PPASE"/>
    <property type="match status" value="1"/>
</dbReference>
<sequence>MTEISILNDVQKIIVLDYGSQYNQLIARRIREFGVFSELKSHKITAQELREINPIGIVLSGGPNSVYADNAFGIDPEIFELEIPILGICYGMQLITHKLGGKVVPAGQAGNREYGQSTLHLRETSKLFSGTPQEQLVLMSHGDAVTEIPEGFHLVGDSNDCPYAAIENTEKNLYGIQFHPEVRHSVYGNDILKNFAISICGARGDWSMDNFIDMEIAKIRETVGDRKVLLGLSGGVDSSVVGVLLQKAIGDQLTCIFVDHGLLRKDEGDQVMGMLGGKFGLNIIRVDASKRFLDLLADVEDPEKKRKIIGNEFVYVFDDEASKLKGVDFLAQGTLYTDIIESGTETAQTIKSHHNVGGLPEDMQFELIEPLNTLFKDEVRALGIALGMPEEIVWRQPFPGPGLAIRVMGAITEEKLETVRESDAILREEIAKAGLDRDVWQYFTVNTGVRSVGVMGDGRTYDYTIAIRAITSIDGMTADFAQLPWDVLKKISTRIVNEVDHVNRIVYDITSKPPATVEWE</sequence>
<proteinExistence type="inferred from homology"/>
<protein>
    <recommendedName>
        <fullName evidence="1">GMP synthase [glutamine-hydrolyzing]</fullName>
        <ecNumber evidence="1">6.3.5.2</ecNumber>
    </recommendedName>
    <alternativeName>
        <fullName evidence="1">GMP synthetase</fullName>
    </alternativeName>
    <alternativeName>
        <fullName evidence="1">Glutamine amidotransferase</fullName>
    </alternativeName>
</protein>
<reference key="1">
    <citation type="journal article" date="2007" name="J. Bacteriol.">
        <title>Complete genome of acute rheumatic fever-associated serotype M5 Streptococcus pyogenes strain Manfredo.</title>
        <authorList>
            <person name="Holden M.T.G."/>
            <person name="Scott A."/>
            <person name="Cherevach I."/>
            <person name="Chillingworth T."/>
            <person name="Churcher C."/>
            <person name="Cronin A."/>
            <person name="Dowd L."/>
            <person name="Feltwell T."/>
            <person name="Hamlin N."/>
            <person name="Holroyd S."/>
            <person name="Jagels K."/>
            <person name="Moule S."/>
            <person name="Mungall K."/>
            <person name="Quail M.A."/>
            <person name="Price C."/>
            <person name="Rabbinowitsch E."/>
            <person name="Sharp S."/>
            <person name="Skelton J."/>
            <person name="Whitehead S."/>
            <person name="Barrell B.G."/>
            <person name="Kehoe M."/>
            <person name="Parkhill J."/>
        </authorList>
    </citation>
    <scope>NUCLEOTIDE SEQUENCE [LARGE SCALE GENOMIC DNA]</scope>
    <source>
        <strain>Manfredo</strain>
    </source>
</reference>
<gene>
    <name evidence="1" type="primary">guaA</name>
    <name type="ordered locus">SpyM50879</name>
</gene>
<evidence type="ECO:0000255" key="1">
    <source>
        <dbReference type="HAMAP-Rule" id="MF_00344"/>
    </source>
</evidence>
<organism>
    <name type="scientific">Streptococcus pyogenes serotype M5 (strain Manfredo)</name>
    <dbReference type="NCBI Taxonomy" id="160491"/>
    <lineage>
        <taxon>Bacteria</taxon>
        <taxon>Bacillati</taxon>
        <taxon>Bacillota</taxon>
        <taxon>Bacilli</taxon>
        <taxon>Lactobacillales</taxon>
        <taxon>Streptococcaceae</taxon>
        <taxon>Streptococcus</taxon>
    </lineage>
</organism>
<feature type="chain" id="PRO_1000120434" description="GMP synthase [glutamine-hydrolyzing]">
    <location>
        <begin position="1"/>
        <end position="520"/>
    </location>
</feature>
<feature type="domain" description="Glutamine amidotransferase type-1" evidence="1">
    <location>
        <begin position="12"/>
        <end position="205"/>
    </location>
</feature>
<feature type="domain" description="GMPS ATP-PPase" evidence="1">
    <location>
        <begin position="206"/>
        <end position="395"/>
    </location>
</feature>
<feature type="active site" description="Nucleophile" evidence="1">
    <location>
        <position position="89"/>
    </location>
</feature>
<feature type="active site" evidence="1">
    <location>
        <position position="179"/>
    </location>
</feature>
<feature type="active site" evidence="1">
    <location>
        <position position="181"/>
    </location>
</feature>
<feature type="binding site" evidence="1">
    <location>
        <begin position="233"/>
        <end position="239"/>
    </location>
    <ligand>
        <name>ATP</name>
        <dbReference type="ChEBI" id="CHEBI:30616"/>
    </ligand>
</feature>
<accession>A2RED2</accession>
<comment type="function">
    <text evidence="1">Catalyzes the synthesis of GMP from XMP.</text>
</comment>
<comment type="catalytic activity">
    <reaction evidence="1">
        <text>XMP + L-glutamine + ATP + H2O = GMP + L-glutamate + AMP + diphosphate + 2 H(+)</text>
        <dbReference type="Rhea" id="RHEA:11680"/>
        <dbReference type="ChEBI" id="CHEBI:15377"/>
        <dbReference type="ChEBI" id="CHEBI:15378"/>
        <dbReference type="ChEBI" id="CHEBI:29985"/>
        <dbReference type="ChEBI" id="CHEBI:30616"/>
        <dbReference type="ChEBI" id="CHEBI:33019"/>
        <dbReference type="ChEBI" id="CHEBI:57464"/>
        <dbReference type="ChEBI" id="CHEBI:58115"/>
        <dbReference type="ChEBI" id="CHEBI:58359"/>
        <dbReference type="ChEBI" id="CHEBI:456215"/>
        <dbReference type="EC" id="6.3.5.2"/>
    </reaction>
</comment>
<comment type="pathway">
    <text evidence="1">Purine metabolism; GMP biosynthesis; GMP from XMP (L-Gln route): step 1/1.</text>
</comment>
<comment type="subunit">
    <text evidence="1">Homodimer.</text>
</comment>